<sequence length="364" mass="42390">MKKAILMMTFGSPEEITFEGVADFFTNIRRGVRPQDHEIQTLYDNYVRIGGTPLQKITHQEVALVEARLGNEYSVYFANKFSSPFIPDVIGQMEADGIEQCICLILEPHYSFYSVMGYEKFLESKQIQFLVIKDWYQEEALLNYWADEIAKILKEEVKQDSFKIIFSAHSVPIFALDFGDPYIDQIFENSKLVVEKLGLSSEQYTNTWQSESDIGIPWIKPDVLEYLREQTAHPDHYIFVPISFISEHIEVLFDNDVECYDLCQEFGVNYHRPPMPNTDSRLIDALVNTVRVNENQEFKEFLPEEETFDELVPSDETKNILAESEDLQMPEFVKKLIEKKGRENVKMPYLIKKMLEKAGKLPKE</sequence>
<name>CPFC_STRP7</name>
<keyword id="KW-0963">Cytoplasm</keyword>
<keyword id="KW-0350">Heme biosynthesis</keyword>
<keyword id="KW-0408">Iron</keyword>
<keyword id="KW-0456">Lyase</keyword>
<keyword id="KW-0479">Metal-binding</keyword>
<keyword id="KW-0627">Porphyrin biosynthesis</keyword>
<organism>
    <name type="scientific">Streptococcus pneumoniae (strain 70585)</name>
    <dbReference type="NCBI Taxonomy" id="488221"/>
    <lineage>
        <taxon>Bacteria</taxon>
        <taxon>Bacillati</taxon>
        <taxon>Bacillota</taxon>
        <taxon>Bacilli</taxon>
        <taxon>Lactobacillales</taxon>
        <taxon>Streptococcaceae</taxon>
        <taxon>Streptococcus</taxon>
    </lineage>
</organism>
<protein>
    <recommendedName>
        <fullName evidence="1">Coproporphyrin III ferrochelatase</fullName>
        <ecNumber evidence="1">4.99.1.9</ecNumber>
    </recommendedName>
</protein>
<feature type="chain" id="PRO_1000189991" description="Coproporphyrin III ferrochelatase">
    <location>
        <begin position="1"/>
        <end position="364"/>
    </location>
</feature>
<feature type="binding site" evidence="1">
    <location>
        <position position="29"/>
    </location>
    <ligand>
        <name>Fe-coproporphyrin III</name>
        <dbReference type="ChEBI" id="CHEBI:68438"/>
    </ligand>
</feature>
<feature type="binding site" evidence="1">
    <location>
        <position position="118"/>
    </location>
    <ligand>
        <name>Fe-coproporphyrin III</name>
        <dbReference type="ChEBI" id="CHEBI:68438"/>
    </ligand>
</feature>
<feature type="binding site" evidence="1">
    <location>
        <position position="169"/>
    </location>
    <ligand>
        <name>Fe(2+)</name>
        <dbReference type="ChEBI" id="CHEBI:29033"/>
    </ligand>
</feature>
<feature type="binding site" evidence="1">
    <location>
        <position position="250"/>
    </location>
    <ligand>
        <name>Fe(2+)</name>
        <dbReference type="ChEBI" id="CHEBI:29033"/>
    </ligand>
</feature>
<dbReference type="EC" id="4.99.1.9" evidence="1"/>
<dbReference type="EMBL" id="CP000918">
    <property type="protein sequence ID" value="ACO17775.1"/>
    <property type="molecule type" value="Genomic_DNA"/>
</dbReference>
<dbReference type="RefSeq" id="WP_000709236.1">
    <property type="nucleotide sequence ID" value="NC_012468.1"/>
</dbReference>
<dbReference type="SMR" id="C1C6Y5"/>
<dbReference type="KEGG" id="snm:SP70585_1048"/>
<dbReference type="HOGENOM" id="CLU_018884_2_1_9"/>
<dbReference type="UniPathway" id="UPA00252"/>
<dbReference type="Proteomes" id="UP000002211">
    <property type="component" value="Chromosome"/>
</dbReference>
<dbReference type="GO" id="GO:0005737">
    <property type="term" value="C:cytoplasm"/>
    <property type="evidence" value="ECO:0007669"/>
    <property type="project" value="UniProtKB-SubCell"/>
</dbReference>
<dbReference type="GO" id="GO:0004325">
    <property type="term" value="F:ferrochelatase activity"/>
    <property type="evidence" value="ECO:0007669"/>
    <property type="project" value="UniProtKB-UniRule"/>
</dbReference>
<dbReference type="GO" id="GO:0046872">
    <property type="term" value="F:metal ion binding"/>
    <property type="evidence" value="ECO:0007669"/>
    <property type="project" value="UniProtKB-KW"/>
</dbReference>
<dbReference type="GO" id="GO:0006783">
    <property type="term" value="P:heme biosynthetic process"/>
    <property type="evidence" value="ECO:0007669"/>
    <property type="project" value="UniProtKB-UniRule"/>
</dbReference>
<dbReference type="CDD" id="cd00419">
    <property type="entry name" value="Ferrochelatase_C"/>
    <property type="match status" value="1"/>
</dbReference>
<dbReference type="FunFam" id="3.40.50.1400:FF:000007">
    <property type="entry name" value="Ferrochelatase"/>
    <property type="match status" value="1"/>
</dbReference>
<dbReference type="Gene3D" id="3.40.50.1400">
    <property type="match status" value="2"/>
</dbReference>
<dbReference type="HAMAP" id="MF_00323">
    <property type="entry name" value="Ferrochelatase"/>
    <property type="match status" value="1"/>
</dbReference>
<dbReference type="InterPro" id="IPR001015">
    <property type="entry name" value="Ferrochelatase"/>
</dbReference>
<dbReference type="InterPro" id="IPR019772">
    <property type="entry name" value="Ferrochelatase_AS"/>
</dbReference>
<dbReference type="InterPro" id="IPR033644">
    <property type="entry name" value="Ferrochelatase_C"/>
</dbReference>
<dbReference type="NCBIfam" id="TIGR00109">
    <property type="entry name" value="hemH"/>
    <property type="match status" value="1"/>
</dbReference>
<dbReference type="PANTHER" id="PTHR11108">
    <property type="entry name" value="FERROCHELATASE"/>
    <property type="match status" value="1"/>
</dbReference>
<dbReference type="PANTHER" id="PTHR11108:SF1">
    <property type="entry name" value="FERROCHELATASE, MITOCHONDRIAL"/>
    <property type="match status" value="1"/>
</dbReference>
<dbReference type="Pfam" id="PF00762">
    <property type="entry name" value="Ferrochelatase"/>
    <property type="match status" value="1"/>
</dbReference>
<dbReference type="SUPFAM" id="SSF53800">
    <property type="entry name" value="Chelatase"/>
    <property type="match status" value="1"/>
</dbReference>
<dbReference type="PROSITE" id="PS00534">
    <property type="entry name" value="FERROCHELATASE"/>
    <property type="match status" value="1"/>
</dbReference>
<reference key="1">
    <citation type="journal article" date="2010" name="Genome Biol.">
        <title>Structure and dynamics of the pan-genome of Streptococcus pneumoniae and closely related species.</title>
        <authorList>
            <person name="Donati C."/>
            <person name="Hiller N.L."/>
            <person name="Tettelin H."/>
            <person name="Muzzi A."/>
            <person name="Croucher N.J."/>
            <person name="Angiuoli S.V."/>
            <person name="Oggioni M."/>
            <person name="Dunning Hotopp J.C."/>
            <person name="Hu F.Z."/>
            <person name="Riley D.R."/>
            <person name="Covacci A."/>
            <person name="Mitchell T.J."/>
            <person name="Bentley S.D."/>
            <person name="Kilian M."/>
            <person name="Ehrlich G.D."/>
            <person name="Rappuoli R."/>
            <person name="Moxon E.R."/>
            <person name="Masignani V."/>
        </authorList>
    </citation>
    <scope>NUCLEOTIDE SEQUENCE [LARGE SCALE GENOMIC DNA]</scope>
    <source>
        <strain>70585</strain>
    </source>
</reference>
<comment type="function">
    <text evidence="1">Involved in coproporphyrin-dependent heme b biosynthesis. Catalyzes the insertion of ferrous iron into coproporphyrin III to form Fe-coproporphyrin III.</text>
</comment>
<comment type="catalytic activity">
    <reaction evidence="1">
        <text>Fe-coproporphyrin III + 2 H(+) = coproporphyrin III + Fe(2+)</text>
        <dbReference type="Rhea" id="RHEA:49572"/>
        <dbReference type="ChEBI" id="CHEBI:15378"/>
        <dbReference type="ChEBI" id="CHEBI:29033"/>
        <dbReference type="ChEBI" id="CHEBI:68438"/>
        <dbReference type="ChEBI" id="CHEBI:131725"/>
        <dbReference type="EC" id="4.99.1.9"/>
    </reaction>
    <physiologicalReaction direction="right-to-left" evidence="1">
        <dbReference type="Rhea" id="RHEA:49574"/>
    </physiologicalReaction>
</comment>
<comment type="pathway">
    <text evidence="1">Porphyrin-containing compound metabolism; protoheme biosynthesis.</text>
</comment>
<comment type="subcellular location">
    <subcellularLocation>
        <location evidence="1">Cytoplasm</location>
    </subcellularLocation>
</comment>
<comment type="similarity">
    <text evidence="1">Belongs to the ferrochelatase family.</text>
</comment>
<evidence type="ECO:0000255" key="1">
    <source>
        <dbReference type="HAMAP-Rule" id="MF_00323"/>
    </source>
</evidence>
<gene>
    <name evidence="1" type="primary">cpfC</name>
    <name type="ordered locus">SP70585_1048</name>
</gene>
<accession>C1C6Y5</accession>
<proteinExistence type="inferred from homology"/>